<evidence type="ECO:0000250" key="1"/>
<evidence type="ECO:0000250" key="2">
    <source>
        <dbReference type="UniProtKB" id="P0CG47"/>
    </source>
</evidence>
<evidence type="ECO:0000255" key="3">
    <source>
        <dbReference type="PROSITE-ProRule" id="PRU00214"/>
    </source>
</evidence>
<evidence type="ECO:0000305" key="4"/>
<sequence>MQIFVKTLTGKTITLEVEPSDTIENVKAKIQDKEGIPPDQQRLIFAGKQLEDGRTLSDYNIQKESTLHLVLRLRGGMQIFVKTLTGKTITLEVEPSDTIENVKAKIQDKEGIPPDQQRLIFAGKQLEDGRTLSDYNIQKESTLHLVLRLRGGMQIFVKTLTGKTITLEVEPSDTIENVKAKIQDKEGIPPDQQRLIFAGKQLEDGRTLSDYNIQKESTLHLVLRLRGGMQIFVKTLTGKTITLEVEPSDTIENVKAKIQDKEGIPPDQQRLIFAGKQLEDGRTLSDYNIQKESTLHLVLRLRGGY</sequence>
<name>UBB_CHICK</name>
<comment type="function">
    <text evidence="1">Ubiquitin Exists either covalently attached to another protein, or free (unanchored). When covalently bound, it is conjugated to target proteins via an isopeptide bond either as a monomer (monoubiquitin), a polymer linked via different Lys residues of the ubiquitin (polyubiquitin chains) or a linear polymer linked via the initiator Met of the ubiquitin (linear polyubiquitin chains). Polyubiquitin chains, when attached to a target protein, have different functions depending on the Lys residue of the ubiquitin that is linked: Lys-6-linked may be involved in DNA repair; Lys-11-linked is involved in ERAD (endoplasmic reticulum-associated degradation) and in cell-cycle regulation; Lys-29-linked is involved in proteotoxic stress response and cell cycle; Lys-33-linked is involved in kinase modification; Lys-48-linked is involved in protein degradation via the proteasome; Lys-63-linked is involved in endocytosis, DNA-damage responses as well as in signaling processes leading to activation of the transcription factor NF-kappa-B. Linear polymer chains formed via attachment by the initiator Met lead to cell signaling. Ubiquitin is usually conjugated to Lys residues of target proteins, however, in rare cases, conjugation to Cys or Ser residues has been observed. When polyubiquitin is free (unanchored-polyubiquitin), it also has distinct roles, such as in activation of protein kinases, and in signaling (By similarity).</text>
</comment>
<comment type="subcellular location">
    <molecule>Ubiquitin</molecule>
    <subcellularLocation>
        <location evidence="1">Cytoplasm</location>
    </subcellularLocation>
    <subcellularLocation>
        <location evidence="1">Nucleus</location>
    </subcellularLocation>
    <subcellularLocation>
        <location evidence="2">Mitochondrion outer membrane</location>
        <topology evidence="2">Peripheral membrane protein</topology>
    </subcellularLocation>
</comment>
<comment type="miscellaneous">
    <text>Ubiquitin is encoded by 4 different genes. Uba52 and Rps27a genes code for a single copy of ubiquitin fused to the ribosomal proteins eL40 and eS31, respectively. UBB and UBC genes code for a polyubiquitin precursor with exact head to tail repeats, the number of repeats differ between species and strains.</text>
</comment>
<comment type="miscellaneous">
    <text>For the sake of clarity sequence features are annotated only for the first chain, and are not repeated for each of the following chains.</text>
</comment>
<comment type="similarity">
    <text evidence="4">Belongs to the ubiquitin family.</text>
</comment>
<protein>
    <recommendedName>
        <fullName>Polyubiquitin-B</fullName>
    </recommendedName>
    <component>
        <recommendedName>
            <fullName>Ubiquitin</fullName>
        </recommendedName>
    </component>
</protein>
<gene>
    <name type="primary">UBB</name>
</gene>
<keyword id="KW-0963">Cytoplasm</keyword>
<keyword id="KW-1017">Isopeptide bond</keyword>
<keyword id="KW-0472">Membrane</keyword>
<keyword id="KW-0496">Mitochondrion</keyword>
<keyword id="KW-1000">Mitochondrion outer membrane</keyword>
<keyword id="KW-0539">Nucleus</keyword>
<keyword id="KW-1185">Reference proteome</keyword>
<keyword id="KW-0677">Repeat</keyword>
<keyword id="KW-0832">Ubl conjugation</keyword>
<organism>
    <name type="scientific">Gallus gallus</name>
    <name type="common">Chicken</name>
    <dbReference type="NCBI Taxonomy" id="9031"/>
    <lineage>
        <taxon>Eukaryota</taxon>
        <taxon>Metazoa</taxon>
        <taxon>Chordata</taxon>
        <taxon>Craniata</taxon>
        <taxon>Vertebrata</taxon>
        <taxon>Euteleostomi</taxon>
        <taxon>Archelosauria</taxon>
        <taxon>Archosauria</taxon>
        <taxon>Dinosauria</taxon>
        <taxon>Saurischia</taxon>
        <taxon>Theropoda</taxon>
        <taxon>Coelurosauria</taxon>
        <taxon>Aves</taxon>
        <taxon>Neognathae</taxon>
        <taxon>Galloanserae</taxon>
        <taxon>Galliformes</taxon>
        <taxon>Phasianidae</taxon>
        <taxon>Phasianinae</taxon>
        <taxon>Gallus</taxon>
    </lineage>
</organism>
<dbReference type="EMBL" id="M14693">
    <property type="protein sequence ID" value="AAA49128.1"/>
    <property type="molecule type" value="Genomic_DNA"/>
</dbReference>
<dbReference type="EMBL" id="X02650">
    <property type="protein sequence ID" value="CAA26488.1"/>
    <property type="molecule type" value="mRNA"/>
</dbReference>
<dbReference type="RefSeq" id="XP_004946721.1">
    <property type="nucleotide sequence ID" value="XM_004946664.2"/>
</dbReference>
<dbReference type="SMR" id="P0CG62"/>
<dbReference type="FunCoup" id="P0CG62">
    <property type="interactions" value="1175"/>
</dbReference>
<dbReference type="STRING" id="9031.ENSGALP00000053353"/>
<dbReference type="PaxDb" id="9031-ENSGALP00000038735"/>
<dbReference type="GeneID" id="101747587"/>
<dbReference type="VEuPathDB" id="HostDB:LOC101747587"/>
<dbReference type="eggNOG" id="KOG0001">
    <property type="taxonomic scope" value="Eukaryota"/>
</dbReference>
<dbReference type="HOGENOM" id="CLU_010412_7_0_1"/>
<dbReference type="InParanoid" id="P0CG62"/>
<dbReference type="OMA" id="VHENTRR"/>
<dbReference type="OrthoDB" id="428577at2759"/>
<dbReference type="PhylomeDB" id="P0CG62"/>
<dbReference type="Reactome" id="R-GGA-110312">
    <property type="pathway name" value="Translesion synthesis by REV1"/>
</dbReference>
<dbReference type="Reactome" id="R-GGA-110314">
    <property type="pathway name" value="Recognition of DNA damage by PCNA-containing replication complex"/>
</dbReference>
<dbReference type="Reactome" id="R-GGA-110320">
    <property type="pathway name" value="Translesion Synthesis by POLH"/>
</dbReference>
<dbReference type="Reactome" id="R-GGA-1169091">
    <property type="pathway name" value="Activation of NF-kappaB in B cells"/>
</dbReference>
<dbReference type="Reactome" id="R-GGA-1227882">
    <property type="pathway name" value="TRAF mediated activation of IRF"/>
</dbReference>
<dbReference type="Reactome" id="R-GGA-1227888">
    <property type="pathway name" value="Negative Regulation of MDA5 signaling"/>
</dbReference>
<dbReference type="Reactome" id="R-GGA-1227892">
    <property type="pathway name" value="TRAF6 mediated NF-kB activation"/>
</dbReference>
<dbReference type="Reactome" id="R-GGA-1234176">
    <property type="pathway name" value="Oxygen-dependent proline hydroxylation of Hypoxia-inducible Factor Alpha"/>
</dbReference>
<dbReference type="Reactome" id="R-GGA-1253288">
    <property type="pathway name" value="Downregulation of ERBB4 signaling"/>
</dbReference>
<dbReference type="Reactome" id="R-GGA-1295596">
    <property type="pathway name" value="Spry regulation of FGF signaling"/>
</dbReference>
<dbReference type="Reactome" id="R-GGA-1358803">
    <property type="pathway name" value="Downregulation of ERBB2:ERBB3 signaling"/>
</dbReference>
<dbReference type="Reactome" id="R-GGA-174048">
    <property type="pathway name" value="APC/C:Cdc20 mediated degradation of Cyclin B"/>
</dbReference>
<dbReference type="Reactome" id="R-GGA-174084">
    <property type="pathway name" value="Autodegradation of Cdh1 by Cdh1:APC/C"/>
</dbReference>
<dbReference type="Reactome" id="R-GGA-174113">
    <property type="pathway name" value="SCF-beta-TrCP mediated degradation of Emi1"/>
</dbReference>
<dbReference type="Reactome" id="R-GGA-174154">
    <property type="pathway name" value="APC/C:Cdc20 mediated degradation of Securin"/>
</dbReference>
<dbReference type="Reactome" id="R-GGA-174178">
    <property type="pathway name" value="APC/C:Cdh1 mediated degradation of Cdc20 and other APC/C:Cdh1 targeted proteins in late mitosis/early G1"/>
</dbReference>
<dbReference type="Reactome" id="R-GGA-174184">
    <property type="pathway name" value="Cdc20:Phospho-APC/C mediated degradation of Cyclin A"/>
</dbReference>
<dbReference type="Reactome" id="R-GGA-179409">
    <property type="pathway name" value="APC-Cdc20 mediated degradation of Nek2A"/>
</dbReference>
<dbReference type="Reactome" id="R-GGA-1799339">
    <property type="pathway name" value="SRP-dependent cotranslational protein targeting to membrane"/>
</dbReference>
<dbReference type="Reactome" id="R-GGA-182971">
    <property type="pathway name" value="EGFR downregulation"/>
</dbReference>
<dbReference type="Reactome" id="R-GGA-187577">
    <property type="pathway name" value="SCF(Skp2)-mediated degradation of p27/p21"/>
</dbReference>
<dbReference type="Reactome" id="R-GGA-195253">
    <property type="pathway name" value="Degradation of beta-catenin by the destruction complex"/>
</dbReference>
<dbReference type="Reactome" id="R-GGA-201681">
    <property type="pathway name" value="TCF dependent signaling in response to WNT"/>
</dbReference>
<dbReference type="Reactome" id="R-GGA-202424">
    <property type="pathway name" value="Downstream TCR signaling"/>
</dbReference>
<dbReference type="Reactome" id="R-GGA-205043">
    <property type="pathway name" value="NRIF signals cell death from the nucleus"/>
</dbReference>
<dbReference type="Reactome" id="R-GGA-209543">
    <property type="pathway name" value="p75NTR recruits signalling complexes"/>
</dbReference>
<dbReference type="Reactome" id="R-GGA-209560">
    <property type="pathway name" value="NF-kB is activated and signals survival"/>
</dbReference>
<dbReference type="Reactome" id="R-GGA-2122948">
    <property type="pathway name" value="Activated NOTCH1 Transmits Signal to the Nucleus"/>
</dbReference>
<dbReference type="Reactome" id="R-GGA-2173788">
    <property type="pathway name" value="Downregulation of TGF-beta receptor signaling"/>
</dbReference>
<dbReference type="Reactome" id="R-GGA-2173791">
    <property type="pathway name" value="TGF-beta receptor signaling in EMT (epithelial to mesenchymal transition)"/>
</dbReference>
<dbReference type="Reactome" id="R-GGA-2173795">
    <property type="pathway name" value="Downregulation of SMAD2/3:SMAD4 transcriptional activity"/>
</dbReference>
<dbReference type="Reactome" id="R-GGA-2173796">
    <property type="pathway name" value="SMAD2/SMAD3:SMAD4 heterotrimer regulates transcription"/>
</dbReference>
<dbReference type="Reactome" id="R-GGA-2467813">
    <property type="pathway name" value="Separation of Sister Chromatids"/>
</dbReference>
<dbReference type="Reactome" id="R-GGA-2559582">
    <property type="pathway name" value="Senescence-Associated Secretory Phenotype (SASP)"/>
</dbReference>
<dbReference type="Reactome" id="R-GGA-2565942">
    <property type="pathway name" value="Regulation of PLK1 Activity at G2/M Transition"/>
</dbReference>
<dbReference type="Reactome" id="R-GGA-2672351">
    <property type="pathway name" value="Stimuli-sensing channels"/>
</dbReference>
<dbReference type="Reactome" id="R-GGA-2871837">
    <property type="pathway name" value="FCERI mediated NF-kB activation"/>
</dbReference>
<dbReference type="Reactome" id="R-GGA-3134975">
    <property type="pathway name" value="Regulation of innate immune responses to cytosolic DNA"/>
</dbReference>
<dbReference type="Reactome" id="R-GGA-349425">
    <property type="pathway name" value="Autodegradation of the E3 ubiquitin ligase COP1"/>
</dbReference>
<dbReference type="Reactome" id="R-GGA-351465">
    <property type="pathway name" value="Fanconi Anemia Pathway in DNA repair"/>
</dbReference>
<dbReference type="Reactome" id="R-GGA-353299">
    <property type="pathway name" value="RAD18 and ubiquitinated PCNA-mediated recruitment of translesion polymerases"/>
</dbReference>
<dbReference type="Reactome" id="R-GGA-353303">
    <property type="pathway name" value="Nucleotide Excision Repair"/>
</dbReference>
<dbReference type="Reactome" id="R-GGA-3769402">
    <property type="pathway name" value="Deactivation of the beta-catenin transactivating complex"/>
</dbReference>
<dbReference type="Reactome" id="R-GGA-382556">
    <property type="pathway name" value="ABC-family proteins mediated transport"/>
</dbReference>
<dbReference type="Reactome" id="R-GGA-433822">
    <property type="pathway name" value="NFkB and MAPK activation mediated by TRAF6"/>
</dbReference>
<dbReference type="Reactome" id="R-GGA-433871">
    <property type="pathway name" value="TRAF6 mediated induction of proinflammatory cytokines"/>
</dbReference>
<dbReference type="Reactome" id="R-GGA-434001">
    <property type="pathway name" value="TAK1 activates NFkB by phosphorylation and activation of IKKs complex"/>
</dbReference>
<dbReference type="Reactome" id="R-GGA-434131">
    <property type="pathway name" value="NFkB activation mediated by RIP1 complexed with activated TLR3"/>
</dbReference>
<dbReference type="Reactome" id="R-GGA-437980">
    <property type="pathway name" value="Activated TAK1 mediates p38 MAP kinase phosphorylation"/>
</dbReference>
<dbReference type="Reactome" id="R-GGA-437986">
    <property type="pathway name" value="Activated TAK1 mediates Jun kinases (JNK) phosphorylation and activation"/>
</dbReference>
<dbReference type="Reactome" id="R-GGA-450302">
    <property type="pathway name" value="activated TAK1 mediates p38 MAPK activation"/>
</dbReference>
<dbReference type="Reactome" id="R-GGA-450321">
    <property type="pathway name" value="JNK (c-Jun kinases) phosphorylation and activation mediated by activated human TAK1"/>
</dbReference>
<dbReference type="Reactome" id="R-GGA-450408">
    <property type="pathway name" value="AUF1 (hnRNP D0) binds and destabilizes mRNA"/>
</dbReference>
<dbReference type="Reactome" id="R-GGA-4641257">
    <property type="pathway name" value="Degradation of AXIN"/>
</dbReference>
<dbReference type="Reactome" id="R-GGA-4641258">
    <property type="pathway name" value="Degradation of DVL"/>
</dbReference>
<dbReference type="Reactome" id="R-GGA-4641263">
    <property type="pathway name" value="Regulation of FZD by ubiquitination"/>
</dbReference>
<dbReference type="Reactome" id="R-GGA-532668">
    <property type="pathway name" value="N-glycan trimming in the ER and Calnexin/Calreticulin cycle"/>
</dbReference>
<dbReference type="Reactome" id="R-GGA-5357905">
    <property type="pathway name" value="Regulation of TNFR1 signaling"/>
</dbReference>
<dbReference type="Reactome" id="R-GGA-5357956">
    <property type="pathway name" value="TNFR1-induced NF-kappa-B signaling pathway"/>
</dbReference>
<dbReference type="Reactome" id="R-GGA-5358346">
    <property type="pathway name" value="Hedgehog ligand biogenesis"/>
</dbReference>
<dbReference type="Reactome" id="R-GGA-5607764">
    <property type="pathway name" value="CLEC7A (Dectin-1) signaling"/>
</dbReference>
<dbReference type="Reactome" id="R-GGA-5610780">
    <property type="pathway name" value="Degradation of GLI1 by the proteasome"/>
</dbReference>
<dbReference type="Reactome" id="R-GGA-5610785">
    <property type="pathway name" value="GLI3 is processed to GLI3R by the proteasome"/>
</dbReference>
<dbReference type="Reactome" id="R-GGA-5632684">
    <property type="pathway name" value="Hedgehog 'on' state"/>
</dbReference>
<dbReference type="Reactome" id="R-GGA-5654726">
    <property type="pathway name" value="Negative regulation of FGFR1 signaling"/>
</dbReference>
<dbReference type="Reactome" id="R-GGA-5654727">
    <property type="pathway name" value="Negative regulation of FGFR2 signaling"/>
</dbReference>
<dbReference type="Reactome" id="R-GGA-5654732">
    <property type="pathway name" value="Negative regulation of FGFR3 signaling"/>
</dbReference>
<dbReference type="Reactome" id="R-GGA-5654733">
    <property type="pathway name" value="Negative regulation of FGFR4 signaling"/>
</dbReference>
<dbReference type="Reactome" id="R-GGA-5655862">
    <property type="pathway name" value="Translesion synthesis by POLK"/>
</dbReference>
<dbReference type="Reactome" id="R-GGA-5656121">
    <property type="pathway name" value="Translesion synthesis by POLI"/>
</dbReference>
<dbReference type="Reactome" id="R-GGA-5656169">
    <property type="pathway name" value="Termination of translesion DNA synthesis"/>
</dbReference>
<dbReference type="Reactome" id="R-GGA-5668541">
    <property type="pathway name" value="TNFR2 non-canonical NF-kB pathway"/>
</dbReference>
<dbReference type="Reactome" id="R-GGA-5675221">
    <property type="pathway name" value="Negative regulation of MAPK pathway"/>
</dbReference>
<dbReference type="Reactome" id="R-GGA-5675482">
    <property type="pathway name" value="Regulation of necroptotic cell death"/>
</dbReference>
<dbReference type="Reactome" id="R-GGA-5684264">
    <property type="pathway name" value="MAP3K8 (TPL2)-dependent MAPK1/3 activation"/>
</dbReference>
<dbReference type="Reactome" id="R-GGA-5685942">
    <property type="pathway name" value="HDR through Homologous Recombination (HRR)"/>
</dbReference>
<dbReference type="Reactome" id="R-GGA-5687128">
    <property type="pathway name" value="MAPK6/MAPK4 signaling"/>
</dbReference>
<dbReference type="Reactome" id="R-GGA-5689603">
    <property type="pathway name" value="UCH proteinases"/>
</dbReference>
<dbReference type="Reactome" id="R-GGA-5689877">
    <property type="pathway name" value="Josephin domain DUBs"/>
</dbReference>
<dbReference type="Reactome" id="R-GGA-5689880">
    <property type="pathway name" value="Ub-specific processing proteases"/>
</dbReference>
<dbReference type="Reactome" id="R-GGA-5689896">
    <property type="pathway name" value="Ovarian tumor domain proteases"/>
</dbReference>
<dbReference type="Reactome" id="R-GGA-5689901">
    <property type="pathway name" value="Metalloprotease DUBs"/>
</dbReference>
<dbReference type="Reactome" id="R-GGA-5693565">
    <property type="pathway name" value="Recruitment and ATM-mediated phosphorylation of repair and signaling proteins at DNA double strand breaks"/>
</dbReference>
<dbReference type="Reactome" id="R-GGA-5696394">
    <property type="pathway name" value="DNA Damage Recognition in GG-NER"/>
</dbReference>
<dbReference type="Reactome" id="R-GGA-5696395">
    <property type="pathway name" value="Formation of Incision Complex in GG-NER"/>
</dbReference>
<dbReference type="Reactome" id="R-GGA-5696397">
    <property type="pathway name" value="Gap-filling DNA repair synthesis and ligation in GG-NER"/>
</dbReference>
<dbReference type="Reactome" id="R-GGA-5696400">
    <property type="pathway name" value="Dual Incision in GG-NER"/>
</dbReference>
<dbReference type="Reactome" id="R-GGA-573298">
    <property type="pathway name" value="NFkB and MAPK activation mediated by TRAF6 upon TLR7 or TLR21 stimulation"/>
</dbReference>
<dbReference type="Reactome" id="R-GGA-6781823">
    <property type="pathway name" value="Formation of TC-NER Pre-Incision Complex"/>
</dbReference>
<dbReference type="Reactome" id="R-GGA-6782135">
    <property type="pathway name" value="Dual incision in TC-NER"/>
</dbReference>
<dbReference type="Reactome" id="R-GGA-6782210">
    <property type="pathway name" value="Gap-filling DNA repair synthesis and ligation in TC-NER"/>
</dbReference>
<dbReference type="Reactome" id="R-GGA-6783310">
    <property type="pathway name" value="Fanconi Anemia Pathway"/>
</dbReference>
<dbReference type="Reactome" id="R-GGA-6804756">
    <property type="pathway name" value="Regulation of TP53 Activity through Phosphorylation"/>
</dbReference>
<dbReference type="Reactome" id="R-GGA-6804757">
    <property type="pathway name" value="Regulation of TP53 Degradation"/>
</dbReference>
<dbReference type="Reactome" id="R-GGA-6804760">
    <property type="pathway name" value="Regulation of TP53 Activity through Methylation"/>
</dbReference>
<dbReference type="Reactome" id="R-GGA-6807004">
    <property type="pathway name" value="Negative regulation of MET activity"/>
</dbReference>
<dbReference type="Reactome" id="R-GGA-68867">
    <property type="pathway name" value="Assembly of the pre-replicative complex"/>
</dbReference>
<dbReference type="Reactome" id="R-GGA-68949">
    <property type="pathway name" value="Orc1 removal from chromatin"/>
</dbReference>
<dbReference type="Reactome" id="R-GGA-69017">
    <property type="pathway name" value="CDK-mediated phosphorylation and removal of Cdc6"/>
</dbReference>
<dbReference type="Reactome" id="R-GGA-69231">
    <property type="pathway name" value="Cyclin D associated events in G1"/>
</dbReference>
<dbReference type="Reactome" id="R-GGA-69601">
    <property type="pathway name" value="Ubiquitin Mediated Degradation of Phosphorylated Cdc25A"/>
</dbReference>
<dbReference type="Reactome" id="R-GGA-72689">
    <property type="pathway name" value="Formation of a pool of free 40S subunits"/>
</dbReference>
<dbReference type="Reactome" id="R-GGA-72706">
    <property type="pathway name" value="GTP hydrolysis and joining of the 60S ribosomal subunit"/>
</dbReference>
<dbReference type="Reactome" id="R-GGA-75815">
    <property type="pathway name" value="Ubiquitin-dependent degradation of Cyclin D"/>
</dbReference>
<dbReference type="Reactome" id="R-GGA-8849469">
    <property type="pathway name" value="PTK6 Regulates RTKs and Their Effectors AKT1 and DOK1"/>
</dbReference>
<dbReference type="Reactome" id="R-GGA-8854050">
    <property type="pathway name" value="FBXL7 down-regulates AURKA during mitotic entry and in early mitosis"/>
</dbReference>
<dbReference type="Reactome" id="R-GGA-8856825">
    <property type="pathway name" value="Cargo recognition for clathrin-mediated endocytosis"/>
</dbReference>
<dbReference type="Reactome" id="R-GGA-8856828">
    <property type="pathway name" value="Clathrin-mediated endocytosis"/>
</dbReference>
<dbReference type="Reactome" id="R-GGA-8863795">
    <property type="pathway name" value="Downregulation of ERBB2 signaling"/>
</dbReference>
<dbReference type="Reactome" id="R-GGA-8866427">
    <property type="pathway name" value="VLDLR internalisation and degradation"/>
</dbReference>
<dbReference type="Reactome" id="R-GGA-8866652">
    <property type="pathway name" value="Synthesis of active ubiquitin: roles of E1 and E2 enzymes"/>
</dbReference>
<dbReference type="Reactome" id="R-GGA-8866654">
    <property type="pathway name" value="E3 ubiquitin ligases ubiquitinate target proteins"/>
</dbReference>
<dbReference type="Reactome" id="R-GGA-8939236">
    <property type="pathway name" value="RUNX1 regulates transcription of genes involved in differentiation of HSCs"/>
</dbReference>
<dbReference type="Reactome" id="R-GGA-8939902">
    <property type="pathway name" value="Regulation of RUNX2 expression and activity"/>
</dbReference>
<dbReference type="Reactome" id="R-GGA-8941858">
    <property type="pathway name" value="Regulation of RUNX3 expression and activity"/>
</dbReference>
<dbReference type="Reactome" id="R-GGA-8948747">
    <property type="pathway name" value="Regulation of PTEN localization"/>
</dbReference>
<dbReference type="Reactome" id="R-GGA-8948751">
    <property type="pathway name" value="Regulation of PTEN stability and activity"/>
</dbReference>
<dbReference type="Reactome" id="R-GGA-8951664">
    <property type="pathway name" value="Neddylation"/>
</dbReference>
<dbReference type="Reactome" id="R-GGA-901032">
    <property type="pathway name" value="ER Quality Control Compartment (ERQC)"/>
</dbReference>
<dbReference type="Reactome" id="R-GGA-9013507">
    <property type="pathway name" value="NOTCH3 Activation and Transmission of Signal to the Nucleus"/>
</dbReference>
<dbReference type="Reactome" id="R-GGA-9020702">
    <property type="pathway name" value="Interleukin-1 signaling"/>
</dbReference>
<dbReference type="Reactome" id="R-GGA-9033241">
    <property type="pathway name" value="Peroxisomal protein import"/>
</dbReference>
<dbReference type="Reactome" id="R-GGA-909733">
    <property type="pathway name" value="Interferon alpha/beta signaling"/>
</dbReference>
<dbReference type="Reactome" id="R-GGA-912631">
    <property type="pathway name" value="Regulation of signaling by CBL"/>
</dbReference>
<dbReference type="Reactome" id="R-GGA-917729">
    <property type="pathway name" value="Endosomal Sorting Complex Required For Transport (ESCRT)"/>
</dbReference>
<dbReference type="Reactome" id="R-GGA-917937">
    <property type="pathway name" value="Iron uptake and transport"/>
</dbReference>
<dbReference type="Reactome" id="R-GGA-936964">
    <property type="pathway name" value="Activation of IRF3, IRF7 mediated by TBK1, IKKEpsilon (IKBKE)"/>
</dbReference>
<dbReference type="Reactome" id="R-GGA-937041">
    <property type="pathway name" value="IKK complex recruitment mediated by RIP1"/>
</dbReference>
<dbReference type="Reactome" id="R-GGA-937042">
    <property type="pathway name" value="IRAK2 mediated activation of TAK1 complex"/>
</dbReference>
<dbReference type="Reactome" id="R-GGA-937072">
    <property type="pathway name" value="TRAF6-mediated induction of TAK1 complex within TLR4 complex"/>
</dbReference>
<dbReference type="Reactome" id="R-GGA-9645460">
    <property type="pathway name" value="Alpha-protein kinase 1 signaling pathway"/>
</dbReference>
<dbReference type="Reactome" id="R-GGA-9646399">
    <property type="pathway name" value="Aggrephagy"/>
</dbReference>
<dbReference type="Reactome" id="R-GGA-9664873">
    <property type="pathway name" value="Pexophagy"/>
</dbReference>
<dbReference type="Reactome" id="R-GGA-9708530">
    <property type="pathway name" value="Regulation of BACH1 activity"/>
</dbReference>
<dbReference type="Reactome" id="R-GGA-975163">
    <property type="pathway name" value="IRAK2 mediated activation of TAK1 complex upon TLR7/8 or 9 stimulation"/>
</dbReference>
<dbReference type="Reactome" id="R-GGA-9755511">
    <property type="pathway name" value="KEAP1-NFE2L2 pathway"/>
</dbReference>
<dbReference type="Reactome" id="R-GGA-9758274">
    <property type="pathway name" value="Regulation of NF-kappa B signaling"/>
</dbReference>
<dbReference type="Reactome" id="R-GGA-975956">
    <property type="pathway name" value="Nonsense Mediated Decay (NMD) independent of the Exon Junction Complex (EJC)"/>
</dbReference>
<dbReference type="Reactome" id="R-GGA-975957">
    <property type="pathway name" value="Nonsense Mediated Decay (NMD) enhanced by the Exon Junction Complex (EJC)"/>
</dbReference>
<dbReference type="Reactome" id="R-GGA-9762114">
    <property type="pathway name" value="GSK3B and BTRC:CUL1-mediated-degradation of NFE2L2"/>
</dbReference>
<dbReference type="Reactome" id="R-GGA-9824878">
    <property type="pathway name" value="Regulation of TBK1, IKKEpsilon (IKBKE)-mediated activation of IRF3, IRF7"/>
</dbReference>
<dbReference type="Reactome" id="R-GGA-983168">
    <property type="pathway name" value="Antigen processing: Ubiquitination &amp; Proteasome degradation"/>
</dbReference>
<dbReference type="Reactome" id="R-GGA-9861718">
    <property type="pathway name" value="Regulation of pyruvate metabolism"/>
</dbReference>
<dbReference type="PRO" id="PR:P0CG62"/>
<dbReference type="Proteomes" id="UP000000539">
    <property type="component" value="Chromosome 19"/>
</dbReference>
<dbReference type="Bgee" id="ENSGALG00000004509">
    <property type="expression patterns" value="Expressed in cerebellum and 13 other cell types or tissues"/>
</dbReference>
<dbReference type="GO" id="GO:0005737">
    <property type="term" value="C:cytoplasm"/>
    <property type="evidence" value="ECO:0000318"/>
    <property type="project" value="GO_Central"/>
</dbReference>
<dbReference type="GO" id="GO:0005741">
    <property type="term" value="C:mitochondrial outer membrane"/>
    <property type="evidence" value="ECO:0007669"/>
    <property type="project" value="UniProtKB-SubCell"/>
</dbReference>
<dbReference type="GO" id="GO:0005654">
    <property type="term" value="C:nucleoplasm"/>
    <property type="evidence" value="ECO:0000304"/>
    <property type="project" value="Reactome"/>
</dbReference>
<dbReference type="GO" id="GO:0005634">
    <property type="term" value="C:nucleus"/>
    <property type="evidence" value="ECO:0000318"/>
    <property type="project" value="GO_Central"/>
</dbReference>
<dbReference type="GO" id="GO:0031386">
    <property type="term" value="F:protein tag activity"/>
    <property type="evidence" value="ECO:0000318"/>
    <property type="project" value="GO_Central"/>
</dbReference>
<dbReference type="GO" id="GO:0031625">
    <property type="term" value="F:ubiquitin protein ligase binding"/>
    <property type="evidence" value="ECO:0000318"/>
    <property type="project" value="GO_Central"/>
</dbReference>
<dbReference type="GO" id="GO:0019941">
    <property type="term" value="P:modification-dependent protein catabolic process"/>
    <property type="evidence" value="ECO:0000318"/>
    <property type="project" value="GO_Central"/>
</dbReference>
<dbReference type="GO" id="GO:0016567">
    <property type="term" value="P:protein ubiquitination"/>
    <property type="evidence" value="ECO:0000318"/>
    <property type="project" value="GO_Central"/>
</dbReference>
<dbReference type="CDD" id="cd01803">
    <property type="entry name" value="Ubl_ubiquitin"/>
    <property type="match status" value="4"/>
</dbReference>
<dbReference type="FunFam" id="3.10.20.90:FF:000158">
    <property type="entry name" value="Polyubiquitin 5"/>
    <property type="match status" value="4"/>
</dbReference>
<dbReference type="Gene3D" id="3.10.20.90">
    <property type="entry name" value="Phosphatidylinositol 3-kinase Catalytic Subunit, Chain A, domain 1"/>
    <property type="match status" value="4"/>
</dbReference>
<dbReference type="InterPro" id="IPR000626">
    <property type="entry name" value="Ubiquitin-like_dom"/>
</dbReference>
<dbReference type="InterPro" id="IPR029071">
    <property type="entry name" value="Ubiquitin-like_domsf"/>
</dbReference>
<dbReference type="InterPro" id="IPR019954">
    <property type="entry name" value="Ubiquitin_CS"/>
</dbReference>
<dbReference type="InterPro" id="IPR019956">
    <property type="entry name" value="Ubiquitin_dom"/>
</dbReference>
<dbReference type="InterPro" id="IPR050158">
    <property type="entry name" value="Ubiquitin_ubiquitin-like"/>
</dbReference>
<dbReference type="PANTHER" id="PTHR10666">
    <property type="entry name" value="UBIQUITIN"/>
    <property type="match status" value="1"/>
</dbReference>
<dbReference type="Pfam" id="PF00240">
    <property type="entry name" value="ubiquitin"/>
    <property type="match status" value="4"/>
</dbReference>
<dbReference type="PRINTS" id="PR00348">
    <property type="entry name" value="UBIQUITIN"/>
</dbReference>
<dbReference type="SMART" id="SM00213">
    <property type="entry name" value="UBQ"/>
    <property type="match status" value="4"/>
</dbReference>
<dbReference type="SUPFAM" id="SSF54236">
    <property type="entry name" value="Ubiquitin-like"/>
    <property type="match status" value="4"/>
</dbReference>
<dbReference type="PROSITE" id="PS00299">
    <property type="entry name" value="UBIQUITIN_1"/>
    <property type="match status" value="4"/>
</dbReference>
<dbReference type="PROSITE" id="PS50053">
    <property type="entry name" value="UBIQUITIN_2"/>
    <property type="match status" value="4"/>
</dbReference>
<proteinExistence type="evidence at transcript level"/>
<feature type="chain" id="PRO_0000114808" description="Ubiquitin">
    <location>
        <begin position="1"/>
        <end position="76"/>
    </location>
</feature>
<feature type="chain" id="PRO_0000396246" description="Ubiquitin">
    <location>
        <begin position="77"/>
        <end position="152"/>
    </location>
</feature>
<feature type="chain" id="PRO_0000396247" description="Ubiquitin">
    <location>
        <begin position="153"/>
        <end position="228"/>
    </location>
</feature>
<feature type="chain" id="PRO_0000396248" description="Ubiquitin">
    <location>
        <begin position="229"/>
        <end position="304"/>
    </location>
</feature>
<feature type="propeptide" id="PRO_0000396249">
    <location>
        <position position="305"/>
    </location>
</feature>
<feature type="domain" description="Ubiquitin-like 1" evidence="3">
    <location>
        <begin position="1"/>
        <end position="76"/>
    </location>
</feature>
<feature type="domain" description="Ubiquitin-like 2" evidence="3">
    <location>
        <begin position="77"/>
        <end position="152"/>
    </location>
</feature>
<feature type="domain" description="Ubiquitin-like 3" evidence="3">
    <location>
        <begin position="153"/>
        <end position="228"/>
    </location>
</feature>
<feature type="domain" description="Ubiquitin-like 4" evidence="3">
    <location>
        <begin position="229"/>
        <end position="304"/>
    </location>
</feature>
<feature type="site" description="Interacts with activating enzyme">
    <location>
        <position position="54"/>
    </location>
</feature>
<feature type="site" description="Essential for function">
    <location>
        <position position="68"/>
    </location>
</feature>
<feature type="site" description="Interacts with activating enzyme">
    <location>
        <position position="72"/>
    </location>
</feature>
<feature type="cross-link" description="Glycyl lysine isopeptide (Lys-Gly) (interchain with G-Cter in ubiquitin)" evidence="1">
    <location>
        <position position="6"/>
    </location>
</feature>
<feature type="cross-link" description="Glycyl lysine isopeptide (Lys-Gly) (interchain with G-Cter in ubiquitin)" evidence="1">
    <location>
        <position position="11"/>
    </location>
</feature>
<feature type="cross-link" description="Glycyl lysine isopeptide (Lys-Gly) (interchain with G-Cter in ubiquitin)" evidence="1">
    <location>
        <position position="27"/>
    </location>
</feature>
<feature type="cross-link" description="Glycyl lysine isopeptide (Lys-Gly) (interchain with G-Cter in ubiquitin)" evidence="1">
    <location>
        <position position="29"/>
    </location>
</feature>
<feature type="cross-link" description="Glycyl lysine isopeptide (Lys-Gly) (interchain with G-Cter in ubiquitin)" evidence="1">
    <location>
        <position position="33"/>
    </location>
</feature>
<feature type="cross-link" description="Glycyl lysine isopeptide (Lys-Gly) (interchain with G-Cter in ubiquitin)" evidence="1">
    <location>
        <position position="48"/>
    </location>
</feature>
<feature type="cross-link" description="Glycyl lysine isopeptide (Lys-Gly) (interchain with G-Cter in ubiquitin)" evidence="1">
    <location>
        <position position="63"/>
    </location>
</feature>
<feature type="cross-link" description="Glycyl lysine isopeptide (Gly-Lys) (interchain with K-? in acceptor proteins)" evidence="3">
    <location>
        <position position="76"/>
    </location>
</feature>
<feature type="sequence conflict" description="In Ref. 2; CAA26488." evidence="4" ref="2">
    <original>L</original>
    <variation>M</variation>
    <location>
        <position position="149"/>
    </location>
</feature>
<feature type="sequence conflict" description="In Ref. 2; CAA26488." evidence="4" ref="2">
    <original>L</original>
    <variation>W</variation>
    <location>
        <position position="271"/>
    </location>
</feature>
<reference key="1">
    <citation type="journal article" date="1986" name="Mol. Cell. Biol.">
        <title>The chicken ubiquitin gene contains a heat shock promoter and expresses an unstable mRNA in heat-shocked cells.</title>
        <authorList>
            <person name="Bond U."/>
            <person name="Schlesinger M.J."/>
        </authorList>
    </citation>
    <scope>NUCLEOTIDE SEQUENCE [GENOMIC DNA]</scope>
</reference>
<reference key="2">
    <citation type="journal article" date="1985" name="Mol. Cell. Biol.">
        <title>Ubiquitin is a heat shock protein in chicken embryo fibroblasts.</title>
        <authorList>
            <person name="Bond U."/>
            <person name="Schlesinger M.J."/>
        </authorList>
    </citation>
    <scope>NUCLEOTIDE SEQUENCE [MRNA] OF 149-305</scope>
</reference>
<accession>P0CG62</accession>
<accession>P02248</accession>
<accession>P02249</accession>
<accession>P02250</accession>
<accession>P62973</accession>
<accession>Q29120</accession>
<accession>Q91887</accession>
<accession>Q91888</accession>